<dbReference type="EMBL" id="BA000026">
    <property type="protein sequence ID" value="BAC43903.1"/>
    <property type="molecule type" value="Genomic_DNA"/>
</dbReference>
<dbReference type="SMR" id="Q8EWU0"/>
<dbReference type="FunCoup" id="Q8EWU0">
    <property type="interactions" value="246"/>
</dbReference>
<dbReference type="STRING" id="272633.gene:10731204"/>
<dbReference type="KEGG" id="mpe:MYPE1110"/>
<dbReference type="eggNOG" id="COG0532">
    <property type="taxonomic scope" value="Bacteria"/>
</dbReference>
<dbReference type="HOGENOM" id="CLU_006301_5_1_14"/>
<dbReference type="InParanoid" id="Q8EWU0"/>
<dbReference type="Proteomes" id="UP000002522">
    <property type="component" value="Chromosome"/>
</dbReference>
<dbReference type="GO" id="GO:0005829">
    <property type="term" value="C:cytosol"/>
    <property type="evidence" value="ECO:0007669"/>
    <property type="project" value="TreeGrafter"/>
</dbReference>
<dbReference type="GO" id="GO:0005525">
    <property type="term" value="F:GTP binding"/>
    <property type="evidence" value="ECO:0007669"/>
    <property type="project" value="UniProtKB-KW"/>
</dbReference>
<dbReference type="GO" id="GO:0003924">
    <property type="term" value="F:GTPase activity"/>
    <property type="evidence" value="ECO:0007669"/>
    <property type="project" value="UniProtKB-UniRule"/>
</dbReference>
<dbReference type="GO" id="GO:0003743">
    <property type="term" value="F:translation initiation factor activity"/>
    <property type="evidence" value="ECO:0007669"/>
    <property type="project" value="UniProtKB-UniRule"/>
</dbReference>
<dbReference type="CDD" id="cd01887">
    <property type="entry name" value="IF2_eIF5B"/>
    <property type="match status" value="1"/>
</dbReference>
<dbReference type="CDD" id="cd03702">
    <property type="entry name" value="IF2_mtIF2_II"/>
    <property type="match status" value="1"/>
</dbReference>
<dbReference type="CDD" id="cd03692">
    <property type="entry name" value="mtIF2_IVc"/>
    <property type="match status" value="1"/>
</dbReference>
<dbReference type="FunFam" id="2.40.30.10:FF:000008">
    <property type="entry name" value="Translation initiation factor IF-2"/>
    <property type="match status" value="1"/>
</dbReference>
<dbReference type="FunFam" id="2.40.30.10:FF:000054">
    <property type="entry name" value="Translation initiation factor IF-2"/>
    <property type="match status" value="1"/>
</dbReference>
<dbReference type="FunFam" id="3.40.50.10050:FF:000001">
    <property type="entry name" value="Translation initiation factor IF-2"/>
    <property type="match status" value="1"/>
</dbReference>
<dbReference type="FunFam" id="3.40.50.300:FF:000019">
    <property type="entry name" value="Translation initiation factor IF-2"/>
    <property type="match status" value="1"/>
</dbReference>
<dbReference type="Gene3D" id="3.40.50.300">
    <property type="entry name" value="P-loop containing nucleotide triphosphate hydrolases"/>
    <property type="match status" value="1"/>
</dbReference>
<dbReference type="Gene3D" id="2.40.30.10">
    <property type="entry name" value="Translation factors"/>
    <property type="match status" value="2"/>
</dbReference>
<dbReference type="Gene3D" id="3.40.50.10050">
    <property type="entry name" value="Translation initiation factor IF- 2, domain 3"/>
    <property type="match status" value="1"/>
</dbReference>
<dbReference type="HAMAP" id="MF_00100_B">
    <property type="entry name" value="IF_2_B"/>
    <property type="match status" value="1"/>
</dbReference>
<dbReference type="InterPro" id="IPR053905">
    <property type="entry name" value="EF-G-like_DII"/>
</dbReference>
<dbReference type="InterPro" id="IPR044145">
    <property type="entry name" value="IF2_II"/>
</dbReference>
<dbReference type="InterPro" id="IPR006847">
    <property type="entry name" value="IF2_N"/>
</dbReference>
<dbReference type="InterPro" id="IPR027417">
    <property type="entry name" value="P-loop_NTPase"/>
</dbReference>
<dbReference type="InterPro" id="IPR005225">
    <property type="entry name" value="Small_GTP-bd"/>
</dbReference>
<dbReference type="InterPro" id="IPR000795">
    <property type="entry name" value="T_Tr_GTP-bd_dom"/>
</dbReference>
<dbReference type="InterPro" id="IPR000178">
    <property type="entry name" value="TF_IF2_bacterial-like"/>
</dbReference>
<dbReference type="InterPro" id="IPR015760">
    <property type="entry name" value="TIF_IF2"/>
</dbReference>
<dbReference type="InterPro" id="IPR023115">
    <property type="entry name" value="TIF_IF2_dom3"/>
</dbReference>
<dbReference type="InterPro" id="IPR036925">
    <property type="entry name" value="TIF_IF2_dom3_sf"/>
</dbReference>
<dbReference type="InterPro" id="IPR009000">
    <property type="entry name" value="Transl_B-barrel_sf"/>
</dbReference>
<dbReference type="NCBIfam" id="TIGR00487">
    <property type="entry name" value="IF-2"/>
    <property type="match status" value="1"/>
</dbReference>
<dbReference type="NCBIfam" id="TIGR00231">
    <property type="entry name" value="small_GTP"/>
    <property type="match status" value="1"/>
</dbReference>
<dbReference type="PANTHER" id="PTHR43381:SF5">
    <property type="entry name" value="TR-TYPE G DOMAIN-CONTAINING PROTEIN"/>
    <property type="match status" value="1"/>
</dbReference>
<dbReference type="PANTHER" id="PTHR43381">
    <property type="entry name" value="TRANSLATION INITIATION FACTOR IF-2-RELATED"/>
    <property type="match status" value="1"/>
</dbReference>
<dbReference type="Pfam" id="PF22042">
    <property type="entry name" value="EF-G_D2"/>
    <property type="match status" value="1"/>
</dbReference>
<dbReference type="Pfam" id="PF00009">
    <property type="entry name" value="GTP_EFTU"/>
    <property type="match status" value="1"/>
</dbReference>
<dbReference type="Pfam" id="PF11987">
    <property type="entry name" value="IF-2"/>
    <property type="match status" value="1"/>
</dbReference>
<dbReference type="Pfam" id="PF04760">
    <property type="entry name" value="IF2_N"/>
    <property type="match status" value="1"/>
</dbReference>
<dbReference type="PRINTS" id="PR00315">
    <property type="entry name" value="ELONGATNFCT"/>
</dbReference>
<dbReference type="SUPFAM" id="SSF52156">
    <property type="entry name" value="Initiation factor IF2/eIF5b, domain 3"/>
    <property type="match status" value="1"/>
</dbReference>
<dbReference type="SUPFAM" id="SSF52540">
    <property type="entry name" value="P-loop containing nucleoside triphosphate hydrolases"/>
    <property type="match status" value="1"/>
</dbReference>
<dbReference type="SUPFAM" id="SSF50447">
    <property type="entry name" value="Translation proteins"/>
    <property type="match status" value="2"/>
</dbReference>
<dbReference type="PROSITE" id="PS51722">
    <property type="entry name" value="G_TR_2"/>
    <property type="match status" value="1"/>
</dbReference>
<evidence type="ECO:0000250" key="1"/>
<evidence type="ECO:0000255" key="2">
    <source>
        <dbReference type="HAMAP-Rule" id="MF_00100"/>
    </source>
</evidence>
<proteinExistence type="inferred from homology"/>
<organism>
    <name type="scientific">Malacoplasma penetrans (strain HF-2)</name>
    <name type="common">Mycoplasma penetrans</name>
    <dbReference type="NCBI Taxonomy" id="272633"/>
    <lineage>
        <taxon>Bacteria</taxon>
        <taxon>Bacillati</taxon>
        <taxon>Mycoplasmatota</taxon>
        <taxon>Mycoplasmoidales</taxon>
        <taxon>Mycoplasmoidaceae</taxon>
        <taxon>Malacoplasma</taxon>
    </lineage>
</organism>
<name>IF2_MALP2</name>
<keyword id="KW-0963">Cytoplasm</keyword>
<keyword id="KW-0342">GTP-binding</keyword>
<keyword id="KW-0396">Initiation factor</keyword>
<keyword id="KW-0547">Nucleotide-binding</keyword>
<keyword id="KW-0648">Protein biosynthesis</keyword>
<keyword id="KW-1185">Reference proteome</keyword>
<accession>Q8EWU0</accession>
<feature type="chain" id="PRO_0000232589" description="Translation initiation factor IF-2">
    <location>
        <begin position="1"/>
        <end position="620"/>
    </location>
</feature>
<feature type="domain" description="tr-type G">
    <location>
        <begin position="126"/>
        <end position="295"/>
    </location>
</feature>
<feature type="region of interest" description="G1" evidence="1">
    <location>
        <begin position="135"/>
        <end position="142"/>
    </location>
</feature>
<feature type="region of interest" description="G2" evidence="1">
    <location>
        <begin position="160"/>
        <end position="164"/>
    </location>
</feature>
<feature type="region of interest" description="G3" evidence="1">
    <location>
        <begin position="181"/>
        <end position="184"/>
    </location>
</feature>
<feature type="region of interest" description="G4" evidence="1">
    <location>
        <begin position="235"/>
        <end position="238"/>
    </location>
</feature>
<feature type="region of interest" description="G5" evidence="1">
    <location>
        <begin position="271"/>
        <end position="273"/>
    </location>
</feature>
<feature type="binding site" evidence="2">
    <location>
        <begin position="135"/>
        <end position="142"/>
    </location>
    <ligand>
        <name>GTP</name>
        <dbReference type="ChEBI" id="CHEBI:37565"/>
    </ligand>
</feature>
<feature type="binding site" evidence="2">
    <location>
        <begin position="181"/>
        <end position="185"/>
    </location>
    <ligand>
        <name>GTP</name>
        <dbReference type="ChEBI" id="CHEBI:37565"/>
    </ligand>
</feature>
<feature type="binding site" evidence="2">
    <location>
        <begin position="235"/>
        <end position="238"/>
    </location>
    <ligand>
        <name>GTP</name>
        <dbReference type="ChEBI" id="CHEBI:37565"/>
    </ligand>
</feature>
<reference key="1">
    <citation type="journal article" date="2002" name="Nucleic Acids Res.">
        <title>The complete genomic sequence of Mycoplasma penetrans, an intracellular bacterial pathogen in humans.</title>
        <authorList>
            <person name="Sasaki Y."/>
            <person name="Ishikawa J."/>
            <person name="Yamashita A."/>
            <person name="Oshima K."/>
            <person name="Kenri T."/>
            <person name="Furuya K."/>
            <person name="Yoshino C."/>
            <person name="Horino A."/>
            <person name="Shiba T."/>
            <person name="Sasaki T."/>
            <person name="Hattori M."/>
        </authorList>
    </citation>
    <scope>NUCLEOTIDE SEQUENCE [LARGE SCALE GENOMIC DNA]</scope>
    <source>
        <strain>HF-2</strain>
    </source>
</reference>
<sequence>MEVFMAKNVKTKSKNKNKKIVDNRTNIDIKSQFKKVETGIKNGVFVFTNNLTIDEFSKKINKHSAEIIKYLFLKGINCNLNTLLDERQMGELCLEFGYDFKKEIQINEDNFLDNIKFEDREDLLDKRPPIVTIMGHVDHGKTTLLDTIRKSKVAATEAGNITQSIGAYQVEWKKHLITFFDTPGHEAFSKMRAVGADLTDIVVLVVAADDGLKPQTEEAIDHALFAKAPIIVFINKMDKKDANIEKIYSQLAEKNVLCEEWGGKTMVIKGSALNNQGIDELLEAIIVTAEIMELKANPKRLANGITIEASMDKGEGAVADLLVQSGTLAVNDYILVGEYYGKVKKMVDFNRKEIKTALPSTPVRISGLNGIPKSGDKWIVTNDEKLLKELSEKRQLNTKQRKLSNFGTNLNENSQGIKELNVILKTDNNGSLEAIKGLLSSIEVTGAKLNLVRAAIGSINESDIDLARTSKSLVVIFNTKVSSKVSDYAISMGITIKNYNIIYQIKDEIERLLKGILDPVFVEKEIGSVEIRQLWSHSSIGVIAGGRVLTGEIKRNAFARIKRKDKEIISNAKINSLRHGKDSIASAAAGKECGFTLENFNDFVEGDIVEIYEIVGETHE</sequence>
<comment type="function">
    <text evidence="2">One of the essential components for the initiation of protein synthesis. Protects formylmethionyl-tRNA from spontaneous hydrolysis and promotes its binding to the 30S ribosomal subunits. Also involved in the hydrolysis of GTP during the formation of the 70S ribosomal complex.</text>
</comment>
<comment type="subcellular location">
    <subcellularLocation>
        <location evidence="2">Cytoplasm</location>
    </subcellularLocation>
</comment>
<comment type="similarity">
    <text evidence="2">Belongs to the TRAFAC class translation factor GTPase superfamily. Classic translation factor GTPase family. IF-2 subfamily.</text>
</comment>
<gene>
    <name evidence="2" type="primary">infB</name>
    <name type="ordered locus">MYPE1110</name>
</gene>
<protein>
    <recommendedName>
        <fullName evidence="2">Translation initiation factor IF-2</fullName>
    </recommendedName>
</protein>